<comment type="similarity">
    <text evidence="1">Belongs to the UPF0125 (RnfH) family.</text>
</comment>
<proteinExistence type="inferred from homology"/>
<accession>Q83K06</accession>
<accession>Q7UBV9</accession>
<feature type="chain" id="PRO_1000013595" description="Protein RnfH">
    <location>
        <begin position="1"/>
        <end position="96"/>
    </location>
</feature>
<gene>
    <name evidence="1" type="primary">rnfH</name>
    <name type="ordered locus">SF2677</name>
    <name type="ordered locus">S2855</name>
</gene>
<reference key="1">
    <citation type="journal article" date="2002" name="Nucleic Acids Res.">
        <title>Genome sequence of Shigella flexneri 2a: insights into pathogenicity through comparison with genomes of Escherichia coli K12 and O157.</title>
        <authorList>
            <person name="Jin Q."/>
            <person name="Yuan Z."/>
            <person name="Xu J."/>
            <person name="Wang Y."/>
            <person name="Shen Y."/>
            <person name="Lu W."/>
            <person name="Wang J."/>
            <person name="Liu H."/>
            <person name="Yang J."/>
            <person name="Yang F."/>
            <person name="Zhang X."/>
            <person name="Zhang J."/>
            <person name="Yang G."/>
            <person name="Wu H."/>
            <person name="Qu D."/>
            <person name="Dong J."/>
            <person name="Sun L."/>
            <person name="Xue Y."/>
            <person name="Zhao A."/>
            <person name="Gao Y."/>
            <person name="Zhu J."/>
            <person name="Kan B."/>
            <person name="Ding K."/>
            <person name="Chen S."/>
            <person name="Cheng H."/>
            <person name="Yao Z."/>
            <person name="He B."/>
            <person name="Chen R."/>
            <person name="Ma D."/>
            <person name="Qiang B."/>
            <person name="Wen Y."/>
            <person name="Hou Y."/>
            <person name="Yu J."/>
        </authorList>
    </citation>
    <scope>NUCLEOTIDE SEQUENCE [LARGE SCALE GENOMIC DNA]</scope>
    <source>
        <strain>301 / Serotype 2a</strain>
    </source>
</reference>
<reference key="2">
    <citation type="journal article" date="2003" name="Infect. Immun.">
        <title>Complete genome sequence and comparative genomics of Shigella flexneri serotype 2a strain 2457T.</title>
        <authorList>
            <person name="Wei J."/>
            <person name="Goldberg M.B."/>
            <person name="Burland V."/>
            <person name="Venkatesan M.M."/>
            <person name="Deng W."/>
            <person name="Fournier G."/>
            <person name="Mayhew G.F."/>
            <person name="Plunkett G. III"/>
            <person name="Rose D.J."/>
            <person name="Darling A."/>
            <person name="Mau B."/>
            <person name="Perna N.T."/>
            <person name="Payne S.M."/>
            <person name="Runyen-Janecky L.J."/>
            <person name="Zhou S."/>
            <person name="Schwartz D.C."/>
            <person name="Blattner F.R."/>
        </authorList>
    </citation>
    <scope>NUCLEOTIDE SEQUENCE [LARGE SCALE GENOMIC DNA]</scope>
    <source>
        <strain>ATCC 700930 / 2457T / Serotype 2a</strain>
    </source>
</reference>
<organism>
    <name type="scientific">Shigella flexneri</name>
    <dbReference type="NCBI Taxonomy" id="623"/>
    <lineage>
        <taxon>Bacteria</taxon>
        <taxon>Pseudomonadati</taxon>
        <taxon>Pseudomonadota</taxon>
        <taxon>Gammaproteobacteria</taxon>
        <taxon>Enterobacterales</taxon>
        <taxon>Enterobacteriaceae</taxon>
        <taxon>Shigella</taxon>
    </lineage>
</organism>
<dbReference type="EMBL" id="AE005674">
    <property type="protein sequence ID" value="AAN44172.2"/>
    <property type="molecule type" value="Genomic_DNA"/>
</dbReference>
<dbReference type="EMBL" id="AE014073">
    <property type="protein sequence ID" value="AAP17997.1"/>
    <property type="molecule type" value="Genomic_DNA"/>
</dbReference>
<dbReference type="RefSeq" id="NP_708465.2">
    <property type="nucleotide sequence ID" value="NC_004337.2"/>
</dbReference>
<dbReference type="RefSeq" id="WP_000900741.1">
    <property type="nucleotide sequence ID" value="NZ_WPGW01000074.1"/>
</dbReference>
<dbReference type="SMR" id="Q83K06"/>
<dbReference type="STRING" id="198214.SF2677"/>
<dbReference type="PaxDb" id="198214-SF2677"/>
<dbReference type="GeneID" id="1025698"/>
<dbReference type="KEGG" id="sfl:SF2677"/>
<dbReference type="KEGG" id="sfx:S2855"/>
<dbReference type="PATRIC" id="fig|198214.7.peg.3187"/>
<dbReference type="HOGENOM" id="CLU_150721_1_0_6"/>
<dbReference type="Proteomes" id="UP000001006">
    <property type="component" value="Chromosome"/>
</dbReference>
<dbReference type="Proteomes" id="UP000002673">
    <property type="component" value="Chromosome"/>
</dbReference>
<dbReference type="Gene3D" id="3.10.20.280">
    <property type="entry name" value="RnfH-like"/>
    <property type="match status" value="1"/>
</dbReference>
<dbReference type="HAMAP" id="MF_00460">
    <property type="entry name" value="UPF0125_RnfH"/>
    <property type="match status" value="1"/>
</dbReference>
<dbReference type="InterPro" id="IPR016155">
    <property type="entry name" value="Mopterin_synth/thiamin_S_b"/>
</dbReference>
<dbReference type="InterPro" id="IPR005346">
    <property type="entry name" value="RnfH"/>
</dbReference>
<dbReference type="InterPro" id="IPR037021">
    <property type="entry name" value="RnfH_sf"/>
</dbReference>
<dbReference type="NCBIfam" id="NF002490">
    <property type="entry name" value="PRK01777.1"/>
    <property type="match status" value="1"/>
</dbReference>
<dbReference type="PANTHER" id="PTHR37483">
    <property type="entry name" value="UPF0125 PROTEIN RATB"/>
    <property type="match status" value="1"/>
</dbReference>
<dbReference type="PANTHER" id="PTHR37483:SF1">
    <property type="entry name" value="UPF0125 PROTEIN RATB"/>
    <property type="match status" value="1"/>
</dbReference>
<dbReference type="Pfam" id="PF03658">
    <property type="entry name" value="Ub-RnfH"/>
    <property type="match status" value="1"/>
</dbReference>
<dbReference type="SUPFAM" id="SSF54285">
    <property type="entry name" value="MoaD/ThiS"/>
    <property type="match status" value="1"/>
</dbReference>
<sequence length="96" mass="10805">MLGKIAVEVAYALPEKQYLQRVTLQEGATVEEAIRASGLLELRTDIDLTKNKVGIYSRPAKLSDSVHDGDRVEIYRPLIADPKELRRQRAEKSANK</sequence>
<protein>
    <recommendedName>
        <fullName evidence="1">Protein RnfH</fullName>
    </recommendedName>
</protein>
<evidence type="ECO:0000255" key="1">
    <source>
        <dbReference type="HAMAP-Rule" id="MF_00460"/>
    </source>
</evidence>
<keyword id="KW-1185">Reference proteome</keyword>
<name>RNFH_SHIFL</name>